<gene>
    <name evidence="1" type="primary">rlmM</name>
    <name type="ordered locus">Sbal_1367</name>
</gene>
<evidence type="ECO:0000255" key="1">
    <source>
        <dbReference type="HAMAP-Rule" id="MF_01551"/>
    </source>
</evidence>
<protein>
    <recommendedName>
        <fullName evidence="1">Ribosomal RNA large subunit methyltransferase M</fullName>
        <ecNumber evidence="1">2.1.1.186</ecNumber>
    </recommendedName>
    <alternativeName>
        <fullName evidence="1">23S rRNA (cytidine2498-2'-O)-methyltransferase</fullName>
    </alternativeName>
    <alternativeName>
        <fullName evidence="1">23S rRNA 2'-O-ribose methyltransferase RlmM</fullName>
    </alternativeName>
</protein>
<dbReference type="EC" id="2.1.1.186" evidence="1"/>
<dbReference type="EMBL" id="CP000563">
    <property type="protein sequence ID" value="ABN60885.1"/>
    <property type="molecule type" value="Genomic_DNA"/>
</dbReference>
<dbReference type="RefSeq" id="WP_011846285.1">
    <property type="nucleotide sequence ID" value="NC_009052.1"/>
</dbReference>
<dbReference type="SMR" id="A3D2C2"/>
<dbReference type="STRING" id="325240.Sbal_1367"/>
<dbReference type="KEGG" id="sbl:Sbal_1367"/>
<dbReference type="HOGENOM" id="CLU_043780_0_0_6"/>
<dbReference type="OrthoDB" id="154490at2"/>
<dbReference type="Proteomes" id="UP000001557">
    <property type="component" value="Chromosome"/>
</dbReference>
<dbReference type="GO" id="GO:0005737">
    <property type="term" value="C:cytoplasm"/>
    <property type="evidence" value="ECO:0007669"/>
    <property type="project" value="UniProtKB-SubCell"/>
</dbReference>
<dbReference type="GO" id="GO:0008757">
    <property type="term" value="F:S-adenosylmethionine-dependent methyltransferase activity"/>
    <property type="evidence" value="ECO:0007669"/>
    <property type="project" value="UniProtKB-UniRule"/>
</dbReference>
<dbReference type="GO" id="GO:0032259">
    <property type="term" value="P:methylation"/>
    <property type="evidence" value="ECO:0007669"/>
    <property type="project" value="UniProtKB-KW"/>
</dbReference>
<dbReference type="GO" id="GO:0006364">
    <property type="term" value="P:rRNA processing"/>
    <property type="evidence" value="ECO:0007669"/>
    <property type="project" value="UniProtKB-UniRule"/>
</dbReference>
<dbReference type="Gene3D" id="3.30.2300.20">
    <property type="match status" value="1"/>
</dbReference>
<dbReference type="Gene3D" id="3.30.70.2810">
    <property type="match status" value="1"/>
</dbReference>
<dbReference type="Gene3D" id="3.40.50.150">
    <property type="entry name" value="Vaccinia Virus protein VP39"/>
    <property type="match status" value="1"/>
</dbReference>
<dbReference type="HAMAP" id="MF_01551">
    <property type="entry name" value="23SrRNA_methyltr_M"/>
    <property type="match status" value="1"/>
</dbReference>
<dbReference type="InterPro" id="IPR040739">
    <property type="entry name" value="RlmM_FDX"/>
</dbReference>
<dbReference type="InterPro" id="IPR048646">
    <property type="entry name" value="RlmM_THUMP-like"/>
</dbReference>
<dbReference type="InterPro" id="IPR002877">
    <property type="entry name" value="RNA_MeTrfase_FtsJ_dom"/>
</dbReference>
<dbReference type="InterPro" id="IPR011224">
    <property type="entry name" value="rRNA_MeTrfase_M"/>
</dbReference>
<dbReference type="InterPro" id="IPR029063">
    <property type="entry name" value="SAM-dependent_MTases_sf"/>
</dbReference>
<dbReference type="NCBIfam" id="NF008734">
    <property type="entry name" value="PRK11760.1"/>
    <property type="match status" value="1"/>
</dbReference>
<dbReference type="PANTHER" id="PTHR37524">
    <property type="entry name" value="RIBOSOMAL RNA LARGE SUBUNIT METHYLTRANSFERASE M"/>
    <property type="match status" value="1"/>
</dbReference>
<dbReference type="PANTHER" id="PTHR37524:SF2">
    <property type="entry name" value="RIBOSOMAL RNA METHYLTRANSFERASE FTSJ DOMAIN-CONTAINING PROTEIN"/>
    <property type="match status" value="1"/>
</dbReference>
<dbReference type="Pfam" id="PF01728">
    <property type="entry name" value="FtsJ"/>
    <property type="match status" value="1"/>
</dbReference>
<dbReference type="Pfam" id="PF18125">
    <property type="entry name" value="RlmM_FDX"/>
    <property type="match status" value="1"/>
</dbReference>
<dbReference type="Pfam" id="PF21239">
    <property type="entry name" value="RLMM_N"/>
    <property type="match status" value="1"/>
</dbReference>
<dbReference type="PIRSF" id="PIRSF028774">
    <property type="entry name" value="UCP028774"/>
    <property type="match status" value="1"/>
</dbReference>
<dbReference type="SUPFAM" id="SSF53335">
    <property type="entry name" value="S-adenosyl-L-methionine-dependent methyltransferases"/>
    <property type="match status" value="1"/>
</dbReference>
<sequence length="361" mass="40968">MKNLFLFCRAGFEKECAAEIQQRAGELNVGGFVKANNNDAYVVYQCFEDDAADTLVKQLPLDSLIFARQMFAASDLLVDLPENDRISPIVAALSDVSKAGEVRVETPDTNEAKELSAFCRKFTVPLRQHLKKSGSLLAQENPKRPIIHVCFIGPGRAYVGYSYSNNSSPHFMGIPRLKMAADAPSRSSLKLDEAFGQFVPKEEQEERIRSGMNSVDLGACPGGWTYQLVRRGMFVSAVDNGPMDEKLMETGQVKHYREDGFRFEPQRKNIYWLVCDMVEKPARVAELIEAWAINGWFKEAIFNLKLPMKSRYKEVTAILETMQTILKENGVTDFKVQCKHLYHDRDEVTVHLWLRPNTAWN</sequence>
<name>RLMM_SHEB5</name>
<accession>A3D2C2</accession>
<organism>
    <name type="scientific">Shewanella baltica (strain OS155 / ATCC BAA-1091)</name>
    <dbReference type="NCBI Taxonomy" id="325240"/>
    <lineage>
        <taxon>Bacteria</taxon>
        <taxon>Pseudomonadati</taxon>
        <taxon>Pseudomonadota</taxon>
        <taxon>Gammaproteobacteria</taxon>
        <taxon>Alteromonadales</taxon>
        <taxon>Shewanellaceae</taxon>
        <taxon>Shewanella</taxon>
    </lineage>
</organism>
<feature type="chain" id="PRO_0000314534" description="Ribosomal RNA large subunit methyltransferase M">
    <location>
        <begin position="1"/>
        <end position="361"/>
    </location>
</feature>
<feature type="active site" description="Proton acceptor" evidence="1">
    <location>
        <position position="305"/>
    </location>
</feature>
<feature type="binding site" evidence="1">
    <location>
        <position position="187"/>
    </location>
    <ligand>
        <name>S-adenosyl-L-methionine</name>
        <dbReference type="ChEBI" id="CHEBI:59789"/>
    </ligand>
</feature>
<feature type="binding site" evidence="1">
    <location>
        <begin position="220"/>
        <end position="223"/>
    </location>
    <ligand>
        <name>S-adenosyl-L-methionine</name>
        <dbReference type="ChEBI" id="CHEBI:59789"/>
    </ligand>
</feature>
<feature type="binding site" evidence="1">
    <location>
        <position position="239"/>
    </location>
    <ligand>
        <name>S-adenosyl-L-methionine</name>
        <dbReference type="ChEBI" id="CHEBI:59789"/>
    </ligand>
</feature>
<feature type="binding site" evidence="1">
    <location>
        <position position="259"/>
    </location>
    <ligand>
        <name>S-adenosyl-L-methionine</name>
        <dbReference type="ChEBI" id="CHEBI:59789"/>
    </ligand>
</feature>
<feature type="binding site" evidence="1">
    <location>
        <position position="276"/>
    </location>
    <ligand>
        <name>S-adenosyl-L-methionine</name>
        <dbReference type="ChEBI" id="CHEBI:59789"/>
    </ligand>
</feature>
<reference key="1">
    <citation type="submission" date="2007-02" db="EMBL/GenBank/DDBJ databases">
        <title>Complete sequence of chromosome of Shewanella baltica OS155.</title>
        <authorList>
            <consortium name="US DOE Joint Genome Institute"/>
            <person name="Copeland A."/>
            <person name="Lucas S."/>
            <person name="Lapidus A."/>
            <person name="Barry K."/>
            <person name="Detter J.C."/>
            <person name="Glavina del Rio T."/>
            <person name="Hammon N."/>
            <person name="Israni S."/>
            <person name="Dalin E."/>
            <person name="Tice H."/>
            <person name="Pitluck S."/>
            <person name="Sims D.R."/>
            <person name="Brettin T."/>
            <person name="Bruce D."/>
            <person name="Han C."/>
            <person name="Tapia R."/>
            <person name="Brainard J."/>
            <person name="Schmutz J."/>
            <person name="Larimer F."/>
            <person name="Land M."/>
            <person name="Hauser L."/>
            <person name="Kyrpides N."/>
            <person name="Mikhailova N."/>
            <person name="Brettar I."/>
            <person name="Klappenbach J."/>
            <person name="Konstantinidis K."/>
            <person name="Rodrigues J."/>
            <person name="Tiedje J."/>
            <person name="Richardson P."/>
        </authorList>
    </citation>
    <scope>NUCLEOTIDE SEQUENCE [LARGE SCALE GENOMIC DNA]</scope>
    <source>
        <strain>OS155 / ATCC BAA-1091</strain>
    </source>
</reference>
<keyword id="KW-0963">Cytoplasm</keyword>
<keyword id="KW-0489">Methyltransferase</keyword>
<keyword id="KW-1185">Reference proteome</keyword>
<keyword id="KW-0698">rRNA processing</keyword>
<keyword id="KW-0949">S-adenosyl-L-methionine</keyword>
<keyword id="KW-0808">Transferase</keyword>
<comment type="function">
    <text evidence="1">Catalyzes the 2'-O-methylation at nucleotide C2498 in 23S rRNA.</text>
</comment>
<comment type="catalytic activity">
    <reaction evidence="1">
        <text>cytidine(2498) in 23S rRNA + S-adenosyl-L-methionine = 2'-O-methylcytidine(2498) in 23S rRNA + S-adenosyl-L-homocysteine + H(+)</text>
        <dbReference type="Rhea" id="RHEA:42788"/>
        <dbReference type="Rhea" id="RHEA-COMP:10244"/>
        <dbReference type="Rhea" id="RHEA-COMP:10245"/>
        <dbReference type="ChEBI" id="CHEBI:15378"/>
        <dbReference type="ChEBI" id="CHEBI:57856"/>
        <dbReference type="ChEBI" id="CHEBI:59789"/>
        <dbReference type="ChEBI" id="CHEBI:74495"/>
        <dbReference type="ChEBI" id="CHEBI:82748"/>
        <dbReference type="EC" id="2.1.1.186"/>
    </reaction>
</comment>
<comment type="subunit">
    <text evidence="1">Monomer.</text>
</comment>
<comment type="subcellular location">
    <subcellularLocation>
        <location evidence="1">Cytoplasm</location>
    </subcellularLocation>
</comment>
<comment type="similarity">
    <text evidence="1">Belongs to the class I-like SAM-binding methyltransferase superfamily. RNA methyltransferase RlmE family. RlmM subfamily.</text>
</comment>
<proteinExistence type="inferred from homology"/>